<dbReference type="EMBL" id="AK010005">
    <property type="protein sequence ID" value="BAB26636.1"/>
    <property type="molecule type" value="mRNA"/>
</dbReference>
<dbReference type="EMBL" id="AK148039">
    <property type="protein sequence ID" value="BAE28305.1"/>
    <property type="molecule type" value="mRNA"/>
</dbReference>
<dbReference type="EMBL" id="BC062179">
    <property type="protein sequence ID" value="AAH62179.1"/>
    <property type="molecule type" value="mRNA"/>
</dbReference>
<dbReference type="CCDS" id="CCDS23787.1"/>
<dbReference type="RefSeq" id="NP_082282.1">
    <property type="nucleotide sequence ID" value="NM_028006.2"/>
</dbReference>
<dbReference type="RefSeq" id="XP_036011922.1">
    <property type="nucleotide sequence ID" value="XM_036156029.1"/>
</dbReference>
<dbReference type="RefSeq" id="XP_036011923.1">
    <property type="nucleotide sequence ID" value="XM_036156030.1"/>
</dbReference>
<dbReference type="RefSeq" id="XP_036011924.1">
    <property type="nucleotide sequence ID" value="XM_036156031.1"/>
</dbReference>
<dbReference type="SMR" id="Q9D6T1"/>
<dbReference type="BioGRID" id="215035">
    <property type="interactions" value="36"/>
</dbReference>
<dbReference type="FunCoup" id="Q9D6T1">
    <property type="interactions" value="1167"/>
</dbReference>
<dbReference type="IntAct" id="Q9D6T1">
    <property type="interactions" value="34"/>
</dbReference>
<dbReference type="STRING" id="10090.ENSMUSP00000019991"/>
<dbReference type="PhosphoSitePlus" id="Q9D6T1"/>
<dbReference type="PaxDb" id="10090-ENSMUSP00000019991"/>
<dbReference type="PeptideAtlas" id="Q9D6T1"/>
<dbReference type="ProteomicsDB" id="263137"/>
<dbReference type="Antibodypedia" id="19362">
    <property type="antibodies" value="191 antibodies from 24 providers"/>
</dbReference>
<dbReference type="DNASU" id="71924"/>
<dbReference type="Ensembl" id="ENSMUST00000019991.8">
    <property type="protein sequence ID" value="ENSMUSP00000019991.8"/>
    <property type="gene ID" value="ENSMUSG00000019845.9"/>
</dbReference>
<dbReference type="GeneID" id="71924"/>
<dbReference type="KEGG" id="mmu:71924"/>
<dbReference type="UCSC" id="uc007evu.1">
    <property type="organism name" value="mouse"/>
</dbReference>
<dbReference type="AGR" id="MGI:1919174"/>
<dbReference type="CTD" id="51175"/>
<dbReference type="MGI" id="MGI:1919174">
    <property type="gene designation" value="Tube1"/>
</dbReference>
<dbReference type="VEuPathDB" id="HostDB:ENSMUSG00000019845"/>
<dbReference type="eggNOG" id="KOG1375">
    <property type="taxonomic scope" value="Eukaryota"/>
</dbReference>
<dbReference type="GeneTree" id="ENSGT00940000155723"/>
<dbReference type="HOGENOM" id="CLU_015718_1_0_1"/>
<dbReference type="InParanoid" id="Q9D6T1"/>
<dbReference type="OMA" id="KRAHLHH"/>
<dbReference type="OrthoDB" id="1662883at2759"/>
<dbReference type="PhylomeDB" id="Q9D6T1"/>
<dbReference type="TreeFam" id="TF330882"/>
<dbReference type="BioGRID-ORCS" id="71924">
    <property type="hits" value="7 hits in 75 CRISPR screens"/>
</dbReference>
<dbReference type="PRO" id="PR:Q9D6T1"/>
<dbReference type="Proteomes" id="UP000000589">
    <property type="component" value="Chromosome 10"/>
</dbReference>
<dbReference type="RNAct" id="Q9D6T1">
    <property type="molecule type" value="protein"/>
</dbReference>
<dbReference type="Bgee" id="ENSMUSG00000019845">
    <property type="expression patterns" value="Expressed in metanephric cortical collecting duct and 190 other cell types or tissues"/>
</dbReference>
<dbReference type="ExpressionAtlas" id="Q9D6T1">
    <property type="expression patterns" value="baseline and differential"/>
</dbReference>
<dbReference type="GO" id="GO:0005813">
    <property type="term" value="C:centrosome"/>
    <property type="evidence" value="ECO:0007669"/>
    <property type="project" value="UniProtKB-SubCell"/>
</dbReference>
<dbReference type="GO" id="GO:0005737">
    <property type="term" value="C:cytoplasm"/>
    <property type="evidence" value="ECO:0007669"/>
    <property type="project" value="UniProtKB-KW"/>
</dbReference>
<dbReference type="GO" id="GO:0005874">
    <property type="term" value="C:microtubule"/>
    <property type="evidence" value="ECO:0007669"/>
    <property type="project" value="UniProtKB-KW"/>
</dbReference>
<dbReference type="GO" id="GO:0005525">
    <property type="term" value="F:GTP binding"/>
    <property type="evidence" value="ECO:0007669"/>
    <property type="project" value="UniProtKB-KW"/>
</dbReference>
<dbReference type="GO" id="GO:0007017">
    <property type="term" value="P:microtubule-based process"/>
    <property type="evidence" value="ECO:0007669"/>
    <property type="project" value="InterPro"/>
</dbReference>
<dbReference type="CDD" id="cd02190">
    <property type="entry name" value="epsilon_tubulin"/>
    <property type="match status" value="1"/>
</dbReference>
<dbReference type="FunFam" id="3.40.50.1440:FF:000017">
    <property type="entry name" value="Tubulin epsilon chain"/>
    <property type="match status" value="1"/>
</dbReference>
<dbReference type="FunFam" id="1.10.287.600:FF:000007">
    <property type="entry name" value="tubulin epsilon chain"/>
    <property type="match status" value="1"/>
</dbReference>
<dbReference type="FunFam" id="3.30.1330.20:FF:000036">
    <property type="entry name" value="Uncharacterized protein"/>
    <property type="match status" value="1"/>
</dbReference>
<dbReference type="Gene3D" id="1.10.287.600">
    <property type="entry name" value="Helix hairpin bin"/>
    <property type="match status" value="1"/>
</dbReference>
<dbReference type="Gene3D" id="3.40.50.1440">
    <property type="entry name" value="Tubulin/FtsZ, GTPase domain"/>
    <property type="match status" value="1"/>
</dbReference>
<dbReference type="InterPro" id="IPR004057">
    <property type="entry name" value="Epsilon_tubulin"/>
</dbReference>
<dbReference type="InterPro" id="IPR008280">
    <property type="entry name" value="Tub_FtsZ_C"/>
</dbReference>
<dbReference type="InterPro" id="IPR000217">
    <property type="entry name" value="Tubulin"/>
</dbReference>
<dbReference type="InterPro" id="IPR018316">
    <property type="entry name" value="Tubulin/FtsZ_2-layer-sand-dom"/>
</dbReference>
<dbReference type="InterPro" id="IPR036525">
    <property type="entry name" value="Tubulin/FtsZ_GTPase_sf"/>
</dbReference>
<dbReference type="InterPro" id="IPR023123">
    <property type="entry name" value="Tubulin_C"/>
</dbReference>
<dbReference type="InterPro" id="IPR017975">
    <property type="entry name" value="Tubulin_CS"/>
</dbReference>
<dbReference type="InterPro" id="IPR003008">
    <property type="entry name" value="Tubulin_FtsZ_GTPase"/>
</dbReference>
<dbReference type="PANTHER" id="PTHR11588">
    <property type="entry name" value="TUBULIN"/>
    <property type="match status" value="1"/>
</dbReference>
<dbReference type="Pfam" id="PF00091">
    <property type="entry name" value="Tubulin"/>
    <property type="match status" value="1"/>
</dbReference>
<dbReference type="Pfam" id="PF03953">
    <property type="entry name" value="Tubulin_C"/>
    <property type="match status" value="1"/>
</dbReference>
<dbReference type="PRINTS" id="PR01519">
    <property type="entry name" value="EPSLNTUBULIN"/>
</dbReference>
<dbReference type="PRINTS" id="PR01161">
    <property type="entry name" value="TUBULIN"/>
</dbReference>
<dbReference type="SMART" id="SM00864">
    <property type="entry name" value="Tubulin"/>
    <property type="match status" value="1"/>
</dbReference>
<dbReference type="SMART" id="SM00865">
    <property type="entry name" value="Tubulin_C"/>
    <property type="match status" value="1"/>
</dbReference>
<dbReference type="SUPFAM" id="SSF55307">
    <property type="entry name" value="Tubulin C-terminal domain-like"/>
    <property type="match status" value="1"/>
</dbReference>
<dbReference type="SUPFAM" id="SSF52490">
    <property type="entry name" value="Tubulin nucleotide-binding domain-like"/>
    <property type="match status" value="1"/>
</dbReference>
<dbReference type="PROSITE" id="PS00227">
    <property type="entry name" value="TUBULIN"/>
    <property type="match status" value="1"/>
</dbReference>
<keyword id="KW-0963">Cytoplasm</keyword>
<keyword id="KW-0206">Cytoskeleton</keyword>
<keyword id="KW-0342">GTP-binding</keyword>
<keyword id="KW-0493">Microtubule</keyword>
<keyword id="KW-0547">Nucleotide-binding</keyword>
<keyword id="KW-1185">Reference proteome</keyword>
<protein>
    <recommendedName>
        <fullName>Tubulin epsilon chain</fullName>
    </recommendedName>
    <alternativeName>
        <fullName>Epsilon-tubulin</fullName>
    </alternativeName>
</protein>
<proteinExistence type="evidence at protein level"/>
<evidence type="ECO:0000250" key="1">
    <source>
        <dbReference type="UniProtKB" id="Q9UJT0"/>
    </source>
</evidence>
<evidence type="ECO:0000255" key="2"/>
<evidence type="ECO:0000269" key="3">
    <source>
    </source>
</evidence>
<evidence type="ECO:0000305" key="4"/>
<feature type="chain" id="PRO_0000233352" description="Tubulin epsilon chain">
    <location>
        <begin position="1"/>
        <end position="475"/>
    </location>
</feature>
<feature type="binding site" evidence="2">
    <location>
        <begin position="148"/>
        <end position="154"/>
    </location>
    <ligand>
        <name>GTP</name>
        <dbReference type="ChEBI" id="CHEBI:37565"/>
    </ligand>
</feature>
<name>TBE_MOUSE</name>
<comment type="subunit">
    <text evidence="3">Found in a complex with TEDC1, TEDC2, TUBE1 and TUBD1.</text>
</comment>
<comment type="subcellular location">
    <subcellularLocation>
        <location evidence="1">Cytoplasm</location>
        <location evidence="1">Cytoskeleton</location>
        <location evidence="1">Microtubule organizing center</location>
        <location evidence="1">Centrosome</location>
    </subcellularLocation>
    <text evidence="1">Associated with pericentriolar material.</text>
</comment>
<comment type="similarity">
    <text evidence="4">Belongs to the tubulin family.</text>
</comment>
<sequence>MTQSVVVQVGQCGNQIGCCFWDLALREHAAVNQKGIYDDAISSFFRNVDTRAVGDGGSISKGRISSLKARAVLIDMEEGVVNEILQGPLRDVFDSKQLITDISGSGNNWAVGHKVFGCLYREQILEKLRKSAEQCDCLQCFFIIHSMGGGTGSGLGTFLLKVLEDEFPEVYRFVTAVYPSSEDDVITSPYNSMLAMKELNEHADCVLPIDNQSLFDIISKIDLVVNSGKLGSAVKPKSLITSNMGAVKKHHKKPFDAMNNIVANLLLSLTSSARFEGSLNMDLNEISMNLVPFPKLHYLVSSLTPLYTLADVNIPPRRLDQMFSDAFSKDHQLIQADPRHSLYLACALIVRGNVQISDLRRNIERLKPALQFVSWNQEGWKTSLCSVPPVGHSHSLLALANNTCVKPTFMELRERFTRLYKKKAHLHHYLQVDGMEESTFTEAVSSLSALIQEYSDLDATKSLPVPDVPRLSVAL</sequence>
<gene>
    <name type="primary">Tube1</name>
</gene>
<accession>Q9D6T1</accession>
<organism>
    <name type="scientific">Mus musculus</name>
    <name type="common">Mouse</name>
    <dbReference type="NCBI Taxonomy" id="10090"/>
    <lineage>
        <taxon>Eukaryota</taxon>
        <taxon>Metazoa</taxon>
        <taxon>Chordata</taxon>
        <taxon>Craniata</taxon>
        <taxon>Vertebrata</taxon>
        <taxon>Euteleostomi</taxon>
        <taxon>Mammalia</taxon>
        <taxon>Eutheria</taxon>
        <taxon>Euarchontoglires</taxon>
        <taxon>Glires</taxon>
        <taxon>Rodentia</taxon>
        <taxon>Myomorpha</taxon>
        <taxon>Muroidea</taxon>
        <taxon>Muridae</taxon>
        <taxon>Murinae</taxon>
        <taxon>Mus</taxon>
        <taxon>Mus</taxon>
    </lineage>
</organism>
<reference key="1">
    <citation type="journal article" date="2005" name="Science">
        <title>The transcriptional landscape of the mammalian genome.</title>
        <authorList>
            <person name="Carninci P."/>
            <person name="Kasukawa T."/>
            <person name="Katayama S."/>
            <person name="Gough J."/>
            <person name="Frith M.C."/>
            <person name="Maeda N."/>
            <person name="Oyama R."/>
            <person name="Ravasi T."/>
            <person name="Lenhard B."/>
            <person name="Wells C."/>
            <person name="Kodzius R."/>
            <person name="Shimokawa K."/>
            <person name="Bajic V.B."/>
            <person name="Brenner S.E."/>
            <person name="Batalov S."/>
            <person name="Forrest A.R."/>
            <person name="Zavolan M."/>
            <person name="Davis M.J."/>
            <person name="Wilming L.G."/>
            <person name="Aidinis V."/>
            <person name="Allen J.E."/>
            <person name="Ambesi-Impiombato A."/>
            <person name="Apweiler R."/>
            <person name="Aturaliya R.N."/>
            <person name="Bailey T.L."/>
            <person name="Bansal M."/>
            <person name="Baxter L."/>
            <person name="Beisel K.W."/>
            <person name="Bersano T."/>
            <person name="Bono H."/>
            <person name="Chalk A.M."/>
            <person name="Chiu K.P."/>
            <person name="Choudhary V."/>
            <person name="Christoffels A."/>
            <person name="Clutterbuck D.R."/>
            <person name="Crowe M.L."/>
            <person name="Dalla E."/>
            <person name="Dalrymple B.P."/>
            <person name="de Bono B."/>
            <person name="Della Gatta G."/>
            <person name="di Bernardo D."/>
            <person name="Down T."/>
            <person name="Engstrom P."/>
            <person name="Fagiolini M."/>
            <person name="Faulkner G."/>
            <person name="Fletcher C.F."/>
            <person name="Fukushima T."/>
            <person name="Furuno M."/>
            <person name="Futaki S."/>
            <person name="Gariboldi M."/>
            <person name="Georgii-Hemming P."/>
            <person name="Gingeras T.R."/>
            <person name="Gojobori T."/>
            <person name="Green R.E."/>
            <person name="Gustincich S."/>
            <person name="Harbers M."/>
            <person name="Hayashi Y."/>
            <person name="Hensch T.K."/>
            <person name="Hirokawa N."/>
            <person name="Hill D."/>
            <person name="Huminiecki L."/>
            <person name="Iacono M."/>
            <person name="Ikeo K."/>
            <person name="Iwama A."/>
            <person name="Ishikawa T."/>
            <person name="Jakt M."/>
            <person name="Kanapin A."/>
            <person name="Katoh M."/>
            <person name="Kawasawa Y."/>
            <person name="Kelso J."/>
            <person name="Kitamura H."/>
            <person name="Kitano H."/>
            <person name="Kollias G."/>
            <person name="Krishnan S.P."/>
            <person name="Kruger A."/>
            <person name="Kummerfeld S.K."/>
            <person name="Kurochkin I.V."/>
            <person name="Lareau L.F."/>
            <person name="Lazarevic D."/>
            <person name="Lipovich L."/>
            <person name="Liu J."/>
            <person name="Liuni S."/>
            <person name="McWilliam S."/>
            <person name="Madan Babu M."/>
            <person name="Madera M."/>
            <person name="Marchionni L."/>
            <person name="Matsuda H."/>
            <person name="Matsuzawa S."/>
            <person name="Miki H."/>
            <person name="Mignone F."/>
            <person name="Miyake S."/>
            <person name="Morris K."/>
            <person name="Mottagui-Tabar S."/>
            <person name="Mulder N."/>
            <person name="Nakano N."/>
            <person name="Nakauchi H."/>
            <person name="Ng P."/>
            <person name="Nilsson R."/>
            <person name="Nishiguchi S."/>
            <person name="Nishikawa S."/>
            <person name="Nori F."/>
            <person name="Ohara O."/>
            <person name="Okazaki Y."/>
            <person name="Orlando V."/>
            <person name="Pang K.C."/>
            <person name="Pavan W.J."/>
            <person name="Pavesi G."/>
            <person name="Pesole G."/>
            <person name="Petrovsky N."/>
            <person name="Piazza S."/>
            <person name="Reed J."/>
            <person name="Reid J.F."/>
            <person name="Ring B.Z."/>
            <person name="Ringwald M."/>
            <person name="Rost B."/>
            <person name="Ruan Y."/>
            <person name="Salzberg S.L."/>
            <person name="Sandelin A."/>
            <person name="Schneider C."/>
            <person name="Schoenbach C."/>
            <person name="Sekiguchi K."/>
            <person name="Semple C.A."/>
            <person name="Seno S."/>
            <person name="Sessa L."/>
            <person name="Sheng Y."/>
            <person name="Shibata Y."/>
            <person name="Shimada H."/>
            <person name="Shimada K."/>
            <person name="Silva D."/>
            <person name="Sinclair B."/>
            <person name="Sperling S."/>
            <person name="Stupka E."/>
            <person name="Sugiura K."/>
            <person name="Sultana R."/>
            <person name="Takenaka Y."/>
            <person name="Taki K."/>
            <person name="Tammoja K."/>
            <person name="Tan S.L."/>
            <person name="Tang S."/>
            <person name="Taylor M.S."/>
            <person name="Tegner J."/>
            <person name="Teichmann S.A."/>
            <person name="Ueda H.R."/>
            <person name="van Nimwegen E."/>
            <person name="Verardo R."/>
            <person name="Wei C.L."/>
            <person name="Yagi K."/>
            <person name="Yamanishi H."/>
            <person name="Zabarovsky E."/>
            <person name="Zhu S."/>
            <person name="Zimmer A."/>
            <person name="Hide W."/>
            <person name="Bult C."/>
            <person name="Grimmond S.M."/>
            <person name="Teasdale R.D."/>
            <person name="Liu E.T."/>
            <person name="Brusic V."/>
            <person name="Quackenbush J."/>
            <person name="Wahlestedt C."/>
            <person name="Mattick J.S."/>
            <person name="Hume D.A."/>
            <person name="Kai C."/>
            <person name="Sasaki D."/>
            <person name="Tomaru Y."/>
            <person name="Fukuda S."/>
            <person name="Kanamori-Katayama M."/>
            <person name="Suzuki M."/>
            <person name="Aoki J."/>
            <person name="Arakawa T."/>
            <person name="Iida J."/>
            <person name="Imamura K."/>
            <person name="Itoh M."/>
            <person name="Kato T."/>
            <person name="Kawaji H."/>
            <person name="Kawagashira N."/>
            <person name="Kawashima T."/>
            <person name="Kojima M."/>
            <person name="Kondo S."/>
            <person name="Konno H."/>
            <person name="Nakano K."/>
            <person name="Ninomiya N."/>
            <person name="Nishio T."/>
            <person name="Okada M."/>
            <person name="Plessy C."/>
            <person name="Shibata K."/>
            <person name="Shiraki T."/>
            <person name="Suzuki S."/>
            <person name="Tagami M."/>
            <person name="Waki K."/>
            <person name="Watahiki A."/>
            <person name="Okamura-Oho Y."/>
            <person name="Suzuki H."/>
            <person name="Kawai J."/>
            <person name="Hayashizaki Y."/>
        </authorList>
    </citation>
    <scope>NUCLEOTIDE SEQUENCE [LARGE SCALE MRNA]</scope>
    <source>
        <strain>C57BL/6J</strain>
        <tissue>Tongue</tissue>
    </source>
</reference>
<reference key="2">
    <citation type="journal article" date="2004" name="Genome Res.">
        <title>The status, quality, and expansion of the NIH full-length cDNA project: the Mammalian Gene Collection (MGC).</title>
        <authorList>
            <consortium name="The MGC Project Team"/>
        </authorList>
    </citation>
    <scope>NUCLEOTIDE SEQUENCE [LARGE SCALE MRNA]</scope>
    <source>
        <tissue>Embryo</tissue>
    </source>
</reference>
<reference key="3">
    <citation type="journal article" date="2018" name="Nat. Genet.">
        <title>A CRISPR-based screen for Hedgehog signaling provides insights into ciliary function and ciliopathies.</title>
        <authorList>
            <person name="Breslow D.K."/>
            <person name="Hoogendoorn S."/>
            <person name="Kopp A.R."/>
            <person name="Morgens D.W."/>
            <person name="Vu B.K."/>
            <person name="Kennedy M.C."/>
            <person name="Han K."/>
            <person name="Li A."/>
            <person name="Hess G.T."/>
            <person name="Bassik M.C."/>
            <person name="Chen J.K."/>
            <person name="Nachury M.V."/>
        </authorList>
    </citation>
    <scope>SUBUNIT</scope>
    <scope>IDENTIFICATION BY MASS SPECTROMETRY</scope>
</reference>